<keyword id="KW-0067">ATP-binding</keyword>
<keyword id="KW-1015">Disulfide bond</keyword>
<keyword id="KW-0235">DNA replication</keyword>
<keyword id="KW-0244">Early protein</keyword>
<keyword id="KW-0547">Nucleotide-binding</keyword>
<keyword id="KW-0560">Oxidoreductase</keyword>
<keyword id="KW-1185">Reference proteome</keyword>
<gene>
    <name evidence="1" type="primary">RIR1</name>
    <name type="ordered locus">61</name>
</gene>
<evidence type="ECO:0000255" key="1">
    <source>
        <dbReference type="HAMAP-Rule" id="MF_04026"/>
    </source>
</evidence>
<evidence type="ECO:0000256" key="2">
    <source>
        <dbReference type="SAM" id="MobiDB-lite"/>
    </source>
</evidence>
<comment type="function">
    <text evidence="1">Ribonucleoside-diphosphate reductase holoenzyme provides the precursors necessary for viral DNA synthesis. Allows virus growth in non-dividing cells, as well as reactivation from latency in infected hosts. Catalyzes the biosynthesis of deoxyribonucleotides from the corresponding ribonucleotides.</text>
</comment>
<comment type="catalytic activity">
    <reaction evidence="1">
        <text>a 2'-deoxyribonucleoside 5'-diphosphate + [thioredoxin]-disulfide + H2O = a ribonucleoside 5'-diphosphate + [thioredoxin]-dithiol</text>
        <dbReference type="Rhea" id="RHEA:23252"/>
        <dbReference type="Rhea" id="RHEA-COMP:10698"/>
        <dbReference type="Rhea" id="RHEA-COMP:10700"/>
        <dbReference type="ChEBI" id="CHEBI:15377"/>
        <dbReference type="ChEBI" id="CHEBI:29950"/>
        <dbReference type="ChEBI" id="CHEBI:50058"/>
        <dbReference type="ChEBI" id="CHEBI:57930"/>
        <dbReference type="ChEBI" id="CHEBI:73316"/>
        <dbReference type="EC" id="1.17.4.1"/>
    </reaction>
</comment>
<comment type="subunit">
    <text evidence="1">Heterotetramer composed of a homodimer of the large subunit (R1) and a homodimer of the small subunit (R2). Larger multisubunit protein complex are also active, composed of (R1)n(R2)n.</text>
</comment>
<comment type="similarity">
    <text evidence="1">Belongs to the ribonucleoside diphosphate reductase large chain family.</text>
</comment>
<sequence>MAAAHLGMPVPVYMAEREEDLALRKLIDTLKISAGWDLEANRMAGRLYHFVMGRRAPVDTRAYVTTFGDKLEKGVHRFLWDNARDIDDLCKDFQNGPEYERLISRGMLSAKRMYDTYVLRTEEGGGEGAVYESALQMYARMAAFFTCQCFAYPSLRKTVSEVEGGSGRMESGLDFFAYFFKILASQLVSCATPVMRSAGLRQSYLASCFIMNPDMSTEDKTLSAVFRDLSPLLCSKSGVGMNLTNFSSGGKNVQSCLRLINSQVEFCNDKNLRPVSVAAYMELWHEQIEEFLAAKLPENPERCQSIFQGVCVPGLFFRLYEQNPDSQWHLFSPKVGGHLAGLYGDKFDEEYARLVRHGLYSSSLPAKSLMFALISAIIKTGSPYILSKDAINRHHWFETQGNAISYANLCAEVVQQPHEFTSTCNLANVCLPACLRARGEGEGAGAAGEGEGADRLSPLTPDLEFCFDTLRAAVRAAVYMINASILGGVCPTPGVRVMQAERSAGIGVQGLADVFAKLGRGYMDAESALLDARIFEVMYYQAVRASNQLVTVGGAPPHANWKNSKLSRGEFHWESWGVQYDSLFIERQLWEELRESVTKHGTFNSQFIALMPTAGTSQLTGLSESFYPFYANVSSKVSNKEEVMKPNITFLERVSPSDVPLLKYHGGDVSKLPPPLAAKYRNFLTAFDYSPEDQIRRAAARSPFVDQSQSFSFFLKEANVKSASYVKNLILLGHGLGLKTIMYYCRIQKQTSLTALECLQCTESPDSGDGVGGYKGGDEEPRSPEHAQCESPDRCLSCQ</sequence>
<proteinExistence type="inferred from homology"/>
<protein>
    <recommendedName>
        <fullName evidence="1">Ribonucleoside-diphosphate reductase large subunit</fullName>
        <shortName evidence="1">R1</shortName>
        <ecNumber evidence="1">1.17.4.1</ecNumber>
    </recommendedName>
    <alternativeName>
        <fullName evidence="1">Ribonucleotide reductase large subunit</fullName>
    </alternativeName>
</protein>
<reference key="1">
    <citation type="journal article" date="1995" name="J. Mol. Biol.">
        <title>The DNA sequence of equine herpesvirus 2.</title>
        <authorList>
            <person name="Telford E.A.R."/>
            <person name="Watson M.S."/>
            <person name="Aird H.C."/>
            <person name="Perry J."/>
            <person name="Davison A.J."/>
        </authorList>
    </citation>
    <scope>NUCLEOTIDE SEQUENCE [LARGE SCALE GENOMIC DNA]</scope>
</reference>
<organism>
    <name type="scientific">Equine herpesvirus 2 (strain 86/87)</name>
    <name type="common">EHV-2</name>
    <dbReference type="NCBI Taxonomy" id="82831"/>
    <lineage>
        <taxon>Viruses</taxon>
        <taxon>Duplodnaviria</taxon>
        <taxon>Heunggongvirae</taxon>
        <taxon>Peploviricota</taxon>
        <taxon>Herviviricetes</taxon>
        <taxon>Herpesvirales</taxon>
        <taxon>Orthoherpesviridae</taxon>
        <taxon>Gammaherpesvirinae</taxon>
        <taxon>Percavirus</taxon>
        <taxon>Percavirus equidgamma2</taxon>
        <taxon>Equid gammaherpesvirus 2</taxon>
    </lineage>
</organism>
<organismHost>
    <name type="scientific">Equus caballus</name>
    <name type="common">Horse</name>
    <dbReference type="NCBI Taxonomy" id="9796"/>
</organismHost>
<name>RIR1_EHV2</name>
<feature type="chain" id="PRO_0000405987" description="Ribonucleoside-diphosphate reductase large subunit">
    <location>
        <begin position="1"/>
        <end position="799"/>
    </location>
</feature>
<feature type="region of interest" description="Disordered" evidence="2">
    <location>
        <begin position="765"/>
        <end position="799"/>
    </location>
</feature>
<feature type="compositionally biased region" description="Basic and acidic residues" evidence="2">
    <location>
        <begin position="776"/>
        <end position="793"/>
    </location>
</feature>
<feature type="active site" description="Proton acceptor" evidence="1">
    <location>
        <position position="408"/>
    </location>
</feature>
<feature type="active site" description="Cysteine radical intermediate" evidence="1">
    <location>
        <position position="410"/>
    </location>
</feature>
<feature type="active site" description="Proton acceptor" evidence="1">
    <location>
        <position position="412"/>
    </location>
</feature>
<feature type="binding site" evidence="1">
    <location>
        <position position="192"/>
    </location>
    <ligand>
        <name>substrate</name>
    </ligand>
</feature>
<feature type="binding site" evidence="1">
    <location>
        <begin position="207"/>
        <end position="208"/>
    </location>
    <ligand>
        <name>substrate</name>
    </ligand>
</feature>
<feature type="binding site" evidence="1">
    <location>
        <position position="238"/>
    </location>
    <ligand>
        <name>substrate</name>
    </ligand>
</feature>
<feature type="binding site" evidence="1">
    <location>
        <begin position="408"/>
        <end position="412"/>
    </location>
    <ligand>
        <name>substrate</name>
    </ligand>
</feature>
<feature type="binding site" evidence="1">
    <location>
        <begin position="612"/>
        <end position="616"/>
    </location>
    <ligand>
        <name>substrate</name>
    </ligand>
</feature>
<feature type="site" description="Important for hydrogen atom transfer" evidence="1">
    <location>
        <position position="208"/>
    </location>
</feature>
<feature type="site" description="Important for hydrogen atom transfer" evidence="1">
    <location>
        <position position="424"/>
    </location>
</feature>
<feature type="site" description="Important for electron transfer" evidence="1">
    <location>
        <position position="743"/>
    </location>
</feature>
<feature type="site" description="Important for electron transfer" evidence="1">
    <location>
        <position position="744"/>
    </location>
</feature>
<feature type="site" description="Interacts with thioredoxin/glutaredoxin" evidence="1">
    <location>
        <position position="795"/>
    </location>
</feature>
<feature type="site" description="Interacts with thioredoxin/glutaredoxin" evidence="1">
    <location>
        <position position="798"/>
    </location>
</feature>
<feature type="disulfide bond" description="Redox-active" evidence="1">
    <location>
        <begin position="208"/>
        <end position="424"/>
    </location>
</feature>
<accession>Q66663</accession>
<dbReference type="EC" id="1.17.4.1" evidence="1"/>
<dbReference type="EMBL" id="U20824">
    <property type="protein sequence ID" value="AAC13849.1"/>
    <property type="molecule type" value="Genomic_DNA"/>
</dbReference>
<dbReference type="PIR" id="S55656">
    <property type="entry name" value="S55656"/>
</dbReference>
<dbReference type="SMR" id="Q66663"/>
<dbReference type="KEGG" id="vg:1461039"/>
<dbReference type="Proteomes" id="UP000007083">
    <property type="component" value="Segment"/>
</dbReference>
<dbReference type="GO" id="GO:0005524">
    <property type="term" value="F:ATP binding"/>
    <property type="evidence" value="ECO:0007669"/>
    <property type="project" value="UniProtKB-UniRule"/>
</dbReference>
<dbReference type="GO" id="GO:0004748">
    <property type="term" value="F:ribonucleoside-diphosphate reductase activity, thioredoxin disulfide as acceptor"/>
    <property type="evidence" value="ECO:0007669"/>
    <property type="project" value="UniProtKB-UniRule"/>
</dbReference>
<dbReference type="GO" id="GO:0009263">
    <property type="term" value="P:deoxyribonucleotide biosynthetic process"/>
    <property type="evidence" value="ECO:0007669"/>
    <property type="project" value="InterPro"/>
</dbReference>
<dbReference type="GO" id="GO:0006260">
    <property type="term" value="P:DNA replication"/>
    <property type="evidence" value="ECO:0007669"/>
    <property type="project" value="UniProtKB-KW"/>
</dbReference>
<dbReference type="GO" id="GO:0016032">
    <property type="term" value="P:viral process"/>
    <property type="evidence" value="ECO:0007669"/>
    <property type="project" value="UniProtKB-UniRule"/>
</dbReference>
<dbReference type="Gene3D" id="3.20.70.20">
    <property type="match status" value="1"/>
</dbReference>
<dbReference type="HAMAP" id="MF_04026">
    <property type="entry name" value="HSV_RIR1"/>
    <property type="match status" value="1"/>
</dbReference>
<dbReference type="InterPro" id="IPR034717">
    <property type="entry name" value="HSV_RIR1"/>
</dbReference>
<dbReference type="InterPro" id="IPR013346">
    <property type="entry name" value="NrdE_NrdA_C"/>
</dbReference>
<dbReference type="InterPro" id="IPR000788">
    <property type="entry name" value="RNR_lg_C"/>
</dbReference>
<dbReference type="InterPro" id="IPR013509">
    <property type="entry name" value="RNR_lsu_N"/>
</dbReference>
<dbReference type="InterPro" id="IPR039718">
    <property type="entry name" value="Rrm1"/>
</dbReference>
<dbReference type="NCBIfam" id="TIGR02506">
    <property type="entry name" value="NrdE_NrdA"/>
    <property type="match status" value="1"/>
</dbReference>
<dbReference type="PANTHER" id="PTHR11573">
    <property type="entry name" value="RIBONUCLEOSIDE-DIPHOSPHATE REDUCTASE LARGE CHAIN"/>
    <property type="match status" value="1"/>
</dbReference>
<dbReference type="PANTHER" id="PTHR11573:SF6">
    <property type="entry name" value="RIBONUCLEOSIDE-DIPHOSPHATE REDUCTASE LARGE SUBUNIT"/>
    <property type="match status" value="1"/>
</dbReference>
<dbReference type="Pfam" id="PF02867">
    <property type="entry name" value="Ribonuc_red_lgC"/>
    <property type="match status" value="1"/>
</dbReference>
<dbReference type="Pfam" id="PF00317">
    <property type="entry name" value="Ribonuc_red_lgN"/>
    <property type="match status" value="1"/>
</dbReference>
<dbReference type="PRINTS" id="PR01183">
    <property type="entry name" value="RIBORDTASEM1"/>
</dbReference>
<dbReference type="SUPFAM" id="SSF51998">
    <property type="entry name" value="PFL-like glycyl radical enzymes"/>
    <property type="match status" value="1"/>
</dbReference>